<proteinExistence type="inferred from homology"/>
<dbReference type="EC" id="5.2.1.8" evidence="2"/>
<dbReference type="EMBL" id="AACD01000064">
    <property type="protein sequence ID" value="EAA59217.1"/>
    <property type="status" value="ALT_SEQ"/>
    <property type="molecule type" value="Genomic_DNA"/>
</dbReference>
<dbReference type="EMBL" id="BN001302">
    <property type="protein sequence ID" value="CBF75117.1"/>
    <property type="molecule type" value="Genomic_DNA"/>
</dbReference>
<dbReference type="RefSeq" id="XP_661512.1">
    <property type="nucleotide sequence ID" value="XM_656420.1"/>
</dbReference>
<dbReference type="SMR" id="P0C1B0"/>
<dbReference type="FunCoup" id="P0C1B0">
    <property type="interactions" value="549"/>
</dbReference>
<dbReference type="STRING" id="227321.P0C1B0"/>
<dbReference type="EnsemblFungi" id="CBF75117">
    <property type="protein sequence ID" value="CBF75117"/>
    <property type="gene ID" value="ANIA_10489"/>
</dbReference>
<dbReference type="KEGG" id="ani:ANIA_10485"/>
<dbReference type="VEuPathDB" id="FungiDB:AN10489"/>
<dbReference type="eggNOG" id="KOG0552">
    <property type="taxonomic scope" value="Eukaryota"/>
</dbReference>
<dbReference type="HOGENOM" id="CLU_005146_1_0_1"/>
<dbReference type="InParanoid" id="P0C1B0"/>
<dbReference type="OMA" id="CPPHMAY"/>
<dbReference type="OrthoDB" id="77911at2759"/>
<dbReference type="Proteomes" id="UP000000560">
    <property type="component" value="Chromosome II"/>
</dbReference>
<dbReference type="GO" id="GO:0000785">
    <property type="term" value="C:chromatin"/>
    <property type="evidence" value="ECO:0000318"/>
    <property type="project" value="GO_Central"/>
</dbReference>
<dbReference type="GO" id="GO:0005730">
    <property type="term" value="C:nucleolus"/>
    <property type="evidence" value="ECO:0000318"/>
    <property type="project" value="GO_Central"/>
</dbReference>
<dbReference type="GO" id="GO:0003755">
    <property type="term" value="F:peptidyl-prolyl cis-trans isomerase activity"/>
    <property type="evidence" value="ECO:0000318"/>
    <property type="project" value="GO_Central"/>
</dbReference>
<dbReference type="FunFam" id="3.10.50.40:FF:000006">
    <property type="entry name" value="Peptidyl-prolyl cis-trans isomerase"/>
    <property type="match status" value="1"/>
</dbReference>
<dbReference type="Gene3D" id="3.10.50.40">
    <property type="match status" value="1"/>
</dbReference>
<dbReference type="Gene3D" id="2.60.120.340">
    <property type="entry name" value="Nucleoplasmin core domain"/>
    <property type="match status" value="1"/>
</dbReference>
<dbReference type="InterPro" id="IPR041232">
    <property type="entry name" value="NPL"/>
</dbReference>
<dbReference type="InterPro" id="IPR046357">
    <property type="entry name" value="PPIase_dom_sf"/>
</dbReference>
<dbReference type="InterPro" id="IPR001179">
    <property type="entry name" value="PPIase_FKBP_dom"/>
</dbReference>
<dbReference type="InterPro" id="IPR023566">
    <property type="entry name" value="PPIase_Fpr3/Fpr4-like"/>
</dbReference>
<dbReference type="PANTHER" id="PTHR43811:SF19">
    <property type="entry name" value="39 KDA FK506-BINDING NUCLEAR PROTEIN"/>
    <property type="match status" value="1"/>
</dbReference>
<dbReference type="PANTHER" id="PTHR43811">
    <property type="entry name" value="FKBP-TYPE PEPTIDYL-PROLYL CIS-TRANS ISOMERASE FKPA"/>
    <property type="match status" value="1"/>
</dbReference>
<dbReference type="Pfam" id="PF00254">
    <property type="entry name" value="FKBP_C"/>
    <property type="match status" value="1"/>
</dbReference>
<dbReference type="Pfam" id="PF17800">
    <property type="entry name" value="NPL"/>
    <property type="match status" value="1"/>
</dbReference>
<dbReference type="PIRSF" id="PIRSF001473">
    <property type="entry name" value="FK506-bp_FPR3"/>
    <property type="match status" value="1"/>
</dbReference>
<dbReference type="SUPFAM" id="SSF54534">
    <property type="entry name" value="FKBP-like"/>
    <property type="match status" value="1"/>
</dbReference>
<dbReference type="PROSITE" id="PS50059">
    <property type="entry name" value="FKBP_PPIASE"/>
    <property type="match status" value="1"/>
</dbReference>
<keyword id="KW-0143">Chaperone</keyword>
<keyword id="KW-0413">Isomerase</keyword>
<keyword id="KW-0539">Nucleus</keyword>
<keyword id="KW-1185">Reference proteome</keyword>
<keyword id="KW-0697">Rotamase</keyword>
<organism>
    <name type="scientific">Emericella nidulans (strain FGSC A4 / ATCC 38163 / CBS 112.46 / NRRL 194 / M139)</name>
    <name type="common">Aspergillus nidulans</name>
    <dbReference type="NCBI Taxonomy" id="227321"/>
    <lineage>
        <taxon>Eukaryota</taxon>
        <taxon>Fungi</taxon>
        <taxon>Dikarya</taxon>
        <taxon>Ascomycota</taxon>
        <taxon>Pezizomycotina</taxon>
        <taxon>Eurotiomycetes</taxon>
        <taxon>Eurotiomycetidae</taxon>
        <taxon>Eurotiales</taxon>
        <taxon>Aspergillaceae</taxon>
        <taxon>Aspergillus</taxon>
        <taxon>Aspergillus subgen. Nidulantes</taxon>
    </lineage>
</organism>
<feature type="chain" id="PRO_0000233081" description="FK506-binding protein 4">
    <location>
        <begin position="1"/>
        <end position="479"/>
    </location>
</feature>
<feature type="domain" description="PPIase FKBP-type" evidence="3">
    <location>
        <begin position="393"/>
        <end position="479"/>
    </location>
</feature>
<feature type="region of interest" description="Disordered" evidence="4">
    <location>
        <begin position="39"/>
        <end position="106"/>
    </location>
</feature>
<feature type="region of interest" description="Disordered" evidence="4">
    <location>
        <begin position="141"/>
        <end position="162"/>
    </location>
</feature>
<feature type="region of interest" description="Disordered" evidence="4">
    <location>
        <begin position="205"/>
        <end position="367"/>
    </location>
</feature>
<feature type="compositionally biased region" description="Acidic residues" evidence="4">
    <location>
        <begin position="40"/>
        <end position="49"/>
    </location>
</feature>
<feature type="compositionally biased region" description="Acidic residues" evidence="4">
    <location>
        <begin position="68"/>
        <end position="93"/>
    </location>
</feature>
<feature type="compositionally biased region" description="Acidic residues" evidence="4">
    <location>
        <begin position="148"/>
        <end position="162"/>
    </location>
</feature>
<feature type="compositionally biased region" description="Acidic residues" evidence="4">
    <location>
        <begin position="214"/>
        <end position="256"/>
    </location>
</feature>
<feature type="compositionally biased region" description="Basic and acidic residues" evidence="4">
    <location>
        <begin position="272"/>
        <end position="299"/>
    </location>
</feature>
<feature type="compositionally biased region" description="Basic and acidic residues" evidence="4">
    <location>
        <begin position="325"/>
        <end position="334"/>
    </location>
</feature>
<feature type="compositionally biased region" description="Basic and acidic residues" evidence="4">
    <location>
        <begin position="348"/>
        <end position="364"/>
    </location>
</feature>
<evidence type="ECO:0000250" key="1"/>
<evidence type="ECO:0000250" key="2">
    <source>
        <dbReference type="UniProtKB" id="Q06205"/>
    </source>
</evidence>
<evidence type="ECO:0000255" key="3">
    <source>
        <dbReference type="PROSITE-ProRule" id="PRU00277"/>
    </source>
</evidence>
<evidence type="ECO:0000256" key="4">
    <source>
        <dbReference type="SAM" id="MobiDB-lite"/>
    </source>
</evidence>
<evidence type="ECO:0000305" key="5"/>
<name>FKBP4_EMENI</name>
<accession>P0C1B0</accession>
<accession>C8V696</accession>
<accession>Q5B6C2</accession>
<protein>
    <recommendedName>
        <fullName>FK506-binding protein 4</fullName>
        <ecNumber evidence="2">5.2.1.8</ecNumber>
    </recommendedName>
    <alternativeName>
        <fullName evidence="2">Histone proline isomerase</fullName>
    </alternativeName>
    <alternativeName>
        <fullName>Peptidyl-prolyl cis-trans isomerase</fullName>
        <shortName>PPIase</shortName>
    </alternativeName>
    <alternativeName>
        <fullName>Rotamase</fullName>
    </alternativeName>
</protein>
<comment type="function">
    <text evidence="2">PPIase that acts as a histone chaperone. Histone proline isomerase that increases the rate of cis-trans isomerization at prolines on the histone H3 N-terminal tail. Proline isomerization influences H3 methylation thereby regulating gene expression.</text>
</comment>
<comment type="catalytic activity">
    <reaction evidence="2">
        <text>[protein]-peptidylproline (omega=180) = [protein]-peptidylproline (omega=0)</text>
        <dbReference type="Rhea" id="RHEA:16237"/>
        <dbReference type="Rhea" id="RHEA-COMP:10747"/>
        <dbReference type="Rhea" id="RHEA-COMP:10748"/>
        <dbReference type="ChEBI" id="CHEBI:83833"/>
        <dbReference type="ChEBI" id="CHEBI:83834"/>
        <dbReference type="EC" id="5.2.1.8"/>
    </reaction>
</comment>
<comment type="activity regulation">
    <text evidence="1">Inhibited by both FK506 and rapamycin.</text>
</comment>
<comment type="subunit">
    <text evidence="2">Binds to histones H3 and H4.</text>
</comment>
<comment type="subcellular location">
    <subcellularLocation>
        <location evidence="2">Nucleus</location>
    </subcellularLocation>
</comment>
<comment type="similarity">
    <text evidence="5">Belongs to the FKBP-type PPIase family. FKBP3/4 subfamily.</text>
</comment>
<comment type="sequence caution" evidence="5">
    <conflict type="erroneous gene model prediction">
        <sequence resource="EMBL-CDS" id="EAA59217"/>
    </conflict>
    <text>The predicted gene AN3908 has been split into 2 genes: AN10489 and AN10485.</text>
</comment>
<gene>
    <name type="primary">fpr4</name>
    <name type="ORF">AN10489</name>
</gene>
<reference key="1">
    <citation type="journal article" date="2005" name="Nature">
        <title>Sequencing of Aspergillus nidulans and comparative analysis with A. fumigatus and A. oryzae.</title>
        <authorList>
            <person name="Galagan J.E."/>
            <person name="Calvo S.E."/>
            <person name="Cuomo C."/>
            <person name="Ma L.-J."/>
            <person name="Wortman J.R."/>
            <person name="Batzoglou S."/>
            <person name="Lee S.-I."/>
            <person name="Bastuerkmen M."/>
            <person name="Spevak C.C."/>
            <person name="Clutterbuck J."/>
            <person name="Kapitonov V."/>
            <person name="Jurka J."/>
            <person name="Scazzocchio C."/>
            <person name="Farman M.L."/>
            <person name="Butler J."/>
            <person name="Purcell S."/>
            <person name="Harris S."/>
            <person name="Braus G.H."/>
            <person name="Draht O."/>
            <person name="Busch S."/>
            <person name="D'Enfert C."/>
            <person name="Bouchier C."/>
            <person name="Goldman G.H."/>
            <person name="Bell-Pedersen D."/>
            <person name="Griffiths-Jones S."/>
            <person name="Doonan J.H."/>
            <person name="Yu J."/>
            <person name="Vienken K."/>
            <person name="Pain A."/>
            <person name="Freitag M."/>
            <person name="Selker E.U."/>
            <person name="Archer D.B."/>
            <person name="Penalva M.A."/>
            <person name="Oakley B.R."/>
            <person name="Momany M."/>
            <person name="Tanaka T."/>
            <person name="Kumagai T."/>
            <person name="Asai K."/>
            <person name="Machida M."/>
            <person name="Nierman W.C."/>
            <person name="Denning D.W."/>
            <person name="Caddick M.X."/>
            <person name="Hynes M."/>
            <person name="Paoletti M."/>
            <person name="Fischer R."/>
            <person name="Miller B.L."/>
            <person name="Dyer P.S."/>
            <person name="Sachs M.S."/>
            <person name="Osmani S.A."/>
            <person name="Birren B.W."/>
        </authorList>
    </citation>
    <scope>NUCLEOTIDE SEQUENCE [LARGE SCALE GENOMIC DNA]</scope>
    <source>
        <strain>FGSC A4 / ATCC 38163 / CBS 112.46 / NRRL 194 / M139</strain>
    </source>
</reference>
<reference key="2">
    <citation type="journal article" date="2009" name="Fungal Genet. Biol.">
        <title>The 2008 update of the Aspergillus nidulans genome annotation: a community effort.</title>
        <authorList>
            <person name="Wortman J.R."/>
            <person name="Gilsenan J.M."/>
            <person name="Joardar V."/>
            <person name="Deegan J."/>
            <person name="Clutterbuck J."/>
            <person name="Andersen M.R."/>
            <person name="Archer D."/>
            <person name="Bencina M."/>
            <person name="Braus G."/>
            <person name="Coutinho P."/>
            <person name="von Dohren H."/>
            <person name="Doonan J."/>
            <person name="Driessen A.J."/>
            <person name="Durek P."/>
            <person name="Espeso E."/>
            <person name="Fekete E."/>
            <person name="Flipphi M."/>
            <person name="Estrada C.G."/>
            <person name="Geysens S."/>
            <person name="Goldman G."/>
            <person name="de Groot P.W."/>
            <person name="Hansen K."/>
            <person name="Harris S.D."/>
            <person name="Heinekamp T."/>
            <person name="Helmstaedt K."/>
            <person name="Henrissat B."/>
            <person name="Hofmann G."/>
            <person name="Homan T."/>
            <person name="Horio T."/>
            <person name="Horiuchi H."/>
            <person name="James S."/>
            <person name="Jones M."/>
            <person name="Karaffa L."/>
            <person name="Karanyi Z."/>
            <person name="Kato M."/>
            <person name="Keller N."/>
            <person name="Kelly D.E."/>
            <person name="Kiel J.A."/>
            <person name="Kim J.M."/>
            <person name="van der Klei I.J."/>
            <person name="Klis F.M."/>
            <person name="Kovalchuk A."/>
            <person name="Krasevec N."/>
            <person name="Kubicek C.P."/>
            <person name="Liu B."/>
            <person name="Maccabe A."/>
            <person name="Meyer V."/>
            <person name="Mirabito P."/>
            <person name="Miskei M."/>
            <person name="Mos M."/>
            <person name="Mullins J."/>
            <person name="Nelson D.R."/>
            <person name="Nielsen J."/>
            <person name="Oakley B.R."/>
            <person name="Osmani S.A."/>
            <person name="Pakula T."/>
            <person name="Paszewski A."/>
            <person name="Paulsen I."/>
            <person name="Pilsyk S."/>
            <person name="Pocsi I."/>
            <person name="Punt P.J."/>
            <person name="Ram A.F."/>
            <person name="Ren Q."/>
            <person name="Robellet X."/>
            <person name="Robson G."/>
            <person name="Seiboth B."/>
            <person name="van Solingen P."/>
            <person name="Specht T."/>
            <person name="Sun J."/>
            <person name="Taheri-Talesh N."/>
            <person name="Takeshita N."/>
            <person name="Ussery D."/>
            <person name="vanKuyk P.A."/>
            <person name="Visser H."/>
            <person name="van de Vondervoort P.J."/>
            <person name="de Vries R.P."/>
            <person name="Walton J."/>
            <person name="Xiang X."/>
            <person name="Xiong Y."/>
            <person name="Zeng A.P."/>
            <person name="Brandt B.W."/>
            <person name="Cornell M.J."/>
            <person name="van den Hondel C.A."/>
            <person name="Visser J."/>
            <person name="Oliver S.G."/>
            <person name="Turner G."/>
        </authorList>
    </citation>
    <scope>GENOME REANNOTATION</scope>
    <source>
        <strain>FGSC A4 / ATCC 38163 / CBS 112.46 / NRRL 194 / M139</strain>
    </source>
</reference>
<reference key="3">
    <citation type="submission" date="2006-02" db="UniProtKB">
        <authorList>
            <person name="Pemberton T.J."/>
        </authorList>
    </citation>
    <scope>REVISION OF GENE MODEL</scope>
</reference>
<sequence>MMSGVQPVAVYALRVPADGALVPAVPDAAAMFRVSMAAIDPDEAPEFDDDSSRRPRATLRIIRAPPGLDEEDSDDDYEDEDDSEDDSEDDEEVNGGPSDKEKARKLKEAAYLKELEDAMSEDDESDEGEEFDLKAAISKLVKGKAPATDDDDEDAESDEGLDLDEMVVCTLDPERNYQQPLDITVAEGERVFFKVTGTHTIYLTGNYVMPIDEPRDDYDEDDDEDEEDYDLSPDEDELDMDELMMGEDDESDDLDGLENPRITEIDTDEEEAPKLVDAKGKKKRGADEAALEAKDDKAKSAANGESKKQQKKLKKNNGEASAVEAKPEQKETKKVQFAKNLEQGPTPSKERKPDEKKPADKAEKTTGTLGVKEVKGVIIDDKKLGKGPAAASGNTVAMRYIGKLENGKVFDSNKKGKPFTFKLGKGEVIKGWDIGVAGMAVGGERRITIPSHLAYGKKGVPGIPGNSKLIFDVKLLEIK</sequence>